<gene>
    <name evidence="1" type="primary">hisH</name>
    <name type="ordered locus">SGO_1406</name>
</gene>
<keyword id="KW-0028">Amino-acid biosynthesis</keyword>
<keyword id="KW-0963">Cytoplasm</keyword>
<keyword id="KW-0315">Glutamine amidotransferase</keyword>
<keyword id="KW-0368">Histidine biosynthesis</keyword>
<keyword id="KW-0378">Hydrolase</keyword>
<keyword id="KW-0456">Lyase</keyword>
<keyword id="KW-1185">Reference proteome</keyword>
<dbReference type="EC" id="4.3.2.10" evidence="1"/>
<dbReference type="EC" id="3.5.1.2" evidence="1"/>
<dbReference type="EMBL" id="CP000725">
    <property type="protein sequence ID" value="ABV10728.1"/>
    <property type="molecule type" value="Genomic_DNA"/>
</dbReference>
<dbReference type="RefSeq" id="WP_012130491.1">
    <property type="nucleotide sequence ID" value="NC_009785.1"/>
</dbReference>
<dbReference type="SMR" id="A8AY26"/>
<dbReference type="STRING" id="467705.SGO_1406"/>
<dbReference type="MEROPS" id="C26.965"/>
<dbReference type="KEGG" id="sgo:SGO_1406"/>
<dbReference type="eggNOG" id="COG0118">
    <property type="taxonomic scope" value="Bacteria"/>
</dbReference>
<dbReference type="HOGENOM" id="CLU_071837_2_2_9"/>
<dbReference type="UniPathway" id="UPA00031">
    <property type="reaction ID" value="UER00010"/>
</dbReference>
<dbReference type="Proteomes" id="UP000001131">
    <property type="component" value="Chromosome"/>
</dbReference>
<dbReference type="GO" id="GO:0005737">
    <property type="term" value="C:cytoplasm"/>
    <property type="evidence" value="ECO:0007669"/>
    <property type="project" value="UniProtKB-SubCell"/>
</dbReference>
<dbReference type="GO" id="GO:0004359">
    <property type="term" value="F:glutaminase activity"/>
    <property type="evidence" value="ECO:0007669"/>
    <property type="project" value="UniProtKB-EC"/>
</dbReference>
<dbReference type="GO" id="GO:0000107">
    <property type="term" value="F:imidazoleglycerol-phosphate synthase activity"/>
    <property type="evidence" value="ECO:0007669"/>
    <property type="project" value="UniProtKB-UniRule"/>
</dbReference>
<dbReference type="GO" id="GO:0016829">
    <property type="term" value="F:lyase activity"/>
    <property type="evidence" value="ECO:0007669"/>
    <property type="project" value="UniProtKB-KW"/>
</dbReference>
<dbReference type="GO" id="GO:0000105">
    <property type="term" value="P:L-histidine biosynthetic process"/>
    <property type="evidence" value="ECO:0007669"/>
    <property type="project" value="UniProtKB-UniRule"/>
</dbReference>
<dbReference type="CDD" id="cd01748">
    <property type="entry name" value="GATase1_IGP_Synthase"/>
    <property type="match status" value="1"/>
</dbReference>
<dbReference type="Gene3D" id="3.40.50.880">
    <property type="match status" value="1"/>
</dbReference>
<dbReference type="HAMAP" id="MF_00278">
    <property type="entry name" value="HisH"/>
    <property type="match status" value="1"/>
</dbReference>
<dbReference type="InterPro" id="IPR029062">
    <property type="entry name" value="Class_I_gatase-like"/>
</dbReference>
<dbReference type="InterPro" id="IPR017926">
    <property type="entry name" value="GATASE"/>
</dbReference>
<dbReference type="InterPro" id="IPR010139">
    <property type="entry name" value="Imidazole-glycPsynth_HisH"/>
</dbReference>
<dbReference type="NCBIfam" id="TIGR01855">
    <property type="entry name" value="IMP_synth_hisH"/>
    <property type="match status" value="1"/>
</dbReference>
<dbReference type="PANTHER" id="PTHR42701">
    <property type="entry name" value="IMIDAZOLE GLYCEROL PHOSPHATE SYNTHASE SUBUNIT HISH"/>
    <property type="match status" value="1"/>
</dbReference>
<dbReference type="PANTHER" id="PTHR42701:SF1">
    <property type="entry name" value="IMIDAZOLE GLYCEROL PHOSPHATE SYNTHASE SUBUNIT HISH"/>
    <property type="match status" value="1"/>
</dbReference>
<dbReference type="Pfam" id="PF00117">
    <property type="entry name" value="GATase"/>
    <property type="match status" value="1"/>
</dbReference>
<dbReference type="PIRSF" id="PIRSF000495">
    <property type="entry name" value="Amidotransf_hisH"/>
    <property type="match status" value="1"/>
</dbReference>
<dbReference type="SUPFAM" id="SSF52317">
    <property type="entry name" value="Class I glutamine amidotransferase-like"/>
    <property type="match status" value="1"/>
</dbReference>
<dbReference type="PROSITE" id="PS51273">
    <property type="entry name" value="GATASE_TYPE_1"/>
    <property type="match status" value="1"/>
</dbReference>
<comment type="function">
    <text evidence="1">IGPS catalyzes the conversion of PRFAR and glutamine to IGP, AICAR and glutamate. The HisH subunit catalyzes the hydrolysis of glutamine to glutamate and ammonia as part of the synthesis of IGP and AICAR. The resulting ammonia molecule is channeled to the active site of HisF.</text>
</comment>
<comment type="catalytic activity">
    <reaction evidence="1">
        <text>5-[(5-phospho-1-deoxy-D-ribulos-1-ylimino)methylamino]-1-(5-phospho-beta-D-ribosyl)imidazole-4-carboxamide + L-glutamine = D-erythro-1-(imidazol-4-yl)glycerol 3-phosphate + 5-amino-1-(5-phospho-beta-D-ribosyl)imidazole-4-carboxamide + L-glutamate + H(+)</text>
        <dbReference type="Rhea" id="RHEA:24793"/>
        <dbReference type="ChEBI" id="CHEBI:15378"/>
        <dbReference type="ChEBI" id="CHEBI:29985"/>
        <dbReference type="ChEBI" id="CHEBI:58278"/>
        <dbReference type="ChEBI" id="CHEBI:58359"/>
        <dbReference type="ChEBI" id="CHEBI:58475"/>
        <dbReference type="ChEBI" id="CHEBI:58525"/>
        <dbReference type="EC" id="4.3.2.10"/>
    </reaction>
</comment>
<comment type="catalytic activity">
    <reaction evidence="1">
        <text>L-glutamine + H2O = L-glutamate + NH4(+)</text>
        <dbReference type="Rhea" id="RHEA:15889"/>
        <dbReference type="ChEBI" id="CHEBI:15377"/>
        <dbReference type="ChEBI" id="CHEBI:28938"/>
        <dbReference type="ChEBI" id="CHEBI:29985"/>
        <dbReference type="ChEBI" id="CHEBI:58359"/>
        <dbReference type="EC" id="3.5.1.2"/>
    </reaction>
</comment>
<comment type="pathway">
    <text evidence="1">Amino-acid biosynthesis; L-histidine biosynthesis; L-histidine from 5-phospho-alpha-D-ribose 1-diphosphate: step 5/9.</text>
</comment>
<comment type="subunit">
    <text evidence="1">Heterodimer of HisH and HisF.</text>
</comment>
<comment type="subcellular location">
    <subcellularLocation>
        <location evidence="1">Cytoplasm</location>
    </subcellularLocation>
</comment>
<accession>A8AY26</accession>
<protein>
    <recommendedName>
        <fullName evidence="1">Imidazole glycerol phosphate synthase subunit HisH</fullName>
        <ecNumber evidence="1">4.3.2.10</ecNumber>
    </recommendedName>
    <alternativeName>
        <fullName evidence="1">IGP synthase glutaminase subunit</fullName>
        <ecNumber evidence="1">3.5.1.2</ecNumber>
    </alternativeName>
    <alternativeName>
        <fullName evidence="1">IGP synthase subunit HisH</fullName>
    </alternativeName>
    <alternativeName>
        <fullName evidence="1">ImGP synthase subunit HisH</fullName>
        <shortName evidence="1">IGPS subunit HisH</shortName>
    </alternativeName>
</protein>
<feature type="chain" id="PRO_1000114791" description="Imidazole glycerol phosphate synthase subunit HisH">
    <location>
        <begin position="1"/>
        <end position="207"/>
    </location>
</feature>
<feature type="domain" description="Glutamine amidotransferase type-1" evidence="1">
    <location>
        <begin position="1"/>
        <end position="206"/>
    </location>
</feature>
<feature type="active site" description="Nucleophile" evidence="1">
    <location>
        <position position="79"/>
    </location>
</feature>
<feature type="active site" evidence="1">
    <location>
        <position position="181"/>
    </location>
</feature>
<feature type="active site" evidence="1">
    <location>
        <position position="183"/>
    </location>
</feature>
<reference key="1">
    <citation type="journal article" date="2007" name="J. Bacteriol.">
        <title>Genome-wide transcriptional changes in Streptococcus gordonii in response to competence signaling peptide.</title>
        <authorList>
            <person name="Vickerman M.M."/>
            <person name="Iobst S."/>
            <person name="Jesionowski A.M."/>
            <person name="Gill S.R."/>
        </authorList>
    </citation>
    <scope>NUCLEOTIDE SEQUENCE [LARGE SCALE GENOMIC DNA]</scope>
    <source>
        <strain>Challis / ATCC 35105 / BCRC 15272 / CH1 / DL1 / V288</strain>
    </source>
</reference>
<proteinExistence type="inferred from homology"/>
<evidence type="ECO:0000255" key="1">
    <source>
        <dbReference type="HAMAP-Rule" id="MF_00278"/>
    </source>
</evidence>
<organism>
    <name type="scientific">Streptococcus gordonii (strain Challis / ATCC 35105 / BCRC 15272 / CH1 / DL1 / V288)</name>
    <dbReference type="NCBI Taxonomy" id="467705"/>
    <lineage>
        <taxon>Bacteria</taxon>
        <taxon>Bacillati</taxon>
        <taxon>Bacillota</taxon>
        <taxon>Bacilli</taxon>
        <taxon>Lactobacillales</taxon>
        <taxon>Streptococcaceae</taxon>
        <taxon>Streptococcus</taxon>
    </lineage>
</organism>
<sequence>MMIVIGYDAGNTANVLRALAQVGVAARLSADPQEILAADGLILPGVGAFPAAMQELEKRGLISVIQQAVADGKPLLGICLGMQLLLESGLENGQNSGLGLIPGVCRRIPDQAGLPVPHMGWNDLQLQQSSALTAGLDGQSVYFVHSYYTDVPEEYLDVTADYGRPIPAMIHRGSVFGCQFHPEKSGAVGLGILEKFKEYVYENTARY</sequence>
<name>HIS5_STRGC</name>